<dbReference type="EMBL" id="CP001279">
    <property type="protein sequence ID" value="ACM92253.1"/>
    <property type="molecule type" value="Genomic_DNA"/>
</dbReference>
<dbReference type="RefSeq" id="WP_012663625.1">
    <property type="nucleotide sequence ID" value="NC_012115.1"/>
</dbReference>
<dbReference type="SMR" id="B9L6E1"/>
<dbReference type="STRING" id="598659.NAMH_1540"/>
<dbReference type="KEGG" id="nam:NAMH_1540"/>
<dbReference type="eggNOG" id="COG0779">
    <property type="taxonomic scope" value="Bacteria"/>
</dbReference>
<dbReference type="HOGENOM" id="CLU_070525_2_2_7"/>
<dbReference type="OrthoDB" id="9805006at2"/>
<dbReference type="Proteomes" id="UP000000448">
    <property type="component" value="Chromosome"/>
</dbReference>
<dbReference type="GO" id="GO:0005829">
    <property type="term" value="C:cytosol"/>
    <property type="evidence" value="ECO:0007669"/>
    <property type="project" value="TreeGrafter"/>
</dbReference>
<dbReference type="GO" id="GO:0000028">
    <property type="term" value="P:ribosomal small subunit assembly"/>
    <property type="evidence" value="ECO:0007669"/>
    <property type="project" value="TreeGrafter"/>
</dbReference>
<dbReference type="GO" id="GO:0006412">
    <property type="term" value="P:translation"/>
    <property type="evidence" value="ECO:0007669"/>
    <property type="project" value="TreeGrafter"/>
</dbReference>
<dbReference type="CDD" id="cd01734">
    <property type="entry name" value="YlxS_C"/>
    <property type="match status" value="1"/>
</dbReference>
<dbReference type="FunFam" id="3.30.300.70:FF:000001">
    <property type="entry name" value="Ribosome maturation factor RimP"/>
    <property type="match status" value="1"/>
</dbReference>
<dbReference type="Gene3D" id="3.30.300.70">
    <property type="entry name" value="RimP-like superfamily, N-terminal"/>
    <property type="match status" value="1"/>
</dbReference>
<dbReference type="HAMAP" id="MF_01077">
    <property type="entry name" value="RimP"/>
    <property type="match status" value="1"/>
</dbReference>
<dbReference type="InterPro" id="IPR003728">
    <property type="entry name" value="Ribosome_maturation_RimP"/>
</dbReference>
<dbReference type="InterPro" id="IPR028998">
    <property type="entry name" value="RimP_C"/>
</dbReference>
<dbReference type="InterPro" id="IPR036847">
    <property type="entry name" value="RimP_C_sf"/>
</dbReference>
<dbReference type="InterPro" id="IPR028989">
    <property type="entry name" value="RimP_N"/>
</dbReference>
<dbReference type="InterPro" id="IPR035956">
    <property type="entry name" value="RimP_N_sf"/>
</dbReference>
<dbReference type="PANTHER" id="PTHR33867">
    <property type="entry name" value="RIBOSOME MATURATION FACTOR RIMP"/>
    <property type="match status" value="1"/>
</dbReference>
<dbReference type="PANTHER" id="PTHR33867:SF1">
    <property type="entry name" value="RIBOSOME MATURATION FACTOR RIMP"/>
    <property type="match status" value="1"/>
</dbReference>
<dbReference type="Pfam" id="PF17384">
    <property type="entry name" value="DUF150_C"/>
    <property type="match status" value="1"/>
</dbReference>
<dbReference type="Pfam" id="PF02576">
    <property type="entry name" value="RimP_N"/>
    <property type="match status" value="1"/>
</dbReference>
<dbReference type="SUPFAM" id="SSF74942">
    <property type="entry name" value="YhbC-like, C-terminal domain"/>
    <property type="match status" value="1"/>
</dbReference>
<dbReference type="SUPFAM" id="SSF75420">
    <property type="entry name" value="YhbC-like, N-terminal domain"/>
    <property type="match status" value="1"/>
</dbReference>
<sequence>MNRSELNDIIKNIVEDNGCDLYDIELSEEGGHKYFRVYITKPGGVSLNDCAKINNLISPIFDIEDPVEGKYFLEVSSPGLERKLTKPEHFEKSIGEKVKVTTNDGTKLKGELKSFIDNVAEIGKEKVNFDDIKKAKTYIEWNTYKYEE</sequence>
<evidence type="ECO:0000255" key="1">
    <source>
        <dbReference type="HAMAP-Rule" id="MF_01077"/>
    </source>
</evidence>
<proteinExistence type="inferred from homology"/>
<accession>B9L6E1</accession>
<protein>
    <recommendedName>
        <fullName evidence="1">Ribosome maturation factor RimP</fullName>
    </recommendedName>
</protein>
<comment type="function">
    <text evidence="1">Required for maturation of 30S ribosomal subunits.</text>
</comment>
<comment type="subcellular location">
    <subcellularLocation>
        <location evidence="1">Cytoplasm</location>
    </subcellularLocation>
</comment>
<comment type="similarity">
    <text evidence="1">Belongs to the RimP family.</text>
</comment>
<organism>
    <name type="scientific">Nautilia profundicola (strain ATCC BAA-1463 / DSM 18972 / AmH)</name>
    <dbReference type="NCBI Taxonomy" id="598659"/>
    <lineage>
        <taxon>Bacteria</taxon>
        <taxon>Pseudomonadati</taxon>
        <taxon>Campylobacterota</taxon>
        <taxon>Epsilonproteobacteria</taxon>
        <taxon>Nautiliales</taxon>
        <taxon>Nautiliaceae</taxon>
        <taxon>Nautilia</taxon>
    </lineage>
</organism>
<feature type="chain" id="PRO_0000384716" description="Ribosome maturation factor RimP">
    <location>
        <begin position="1"/>
        <end position="148"/>
    </location>
</feature>
<name>RIMP_NAUPA</name>
<keyword id="KW-0963">Cytoplasm</keyword>
<keyword id="KW-0690">Ribosome biogenesis</keyword>
<reference key="1">
    <citation type="journal article" date="2009" name="PLoS Genet.">
        <title>Adaptations to submarine hydrothermal environments exemplified by the genome of Nautilia profundicola.</title>
        <authorList>
            <person name="Campbell B.J."/>
            <person name="Smith J.L."/>
            <person name="Hanson T.E."/>
            <person name="Klotz M.G."/>
            <person name="Stein L.Y."/>
            <person name="Lee C.K."/>
            <person name="Wu D."/>
            <person name="Robinson J.M."/>
            <person name="Khouri H.M."/>
            <person name="Eisen J.A."/>
            <person name="Cary S.C."/>
        </authorList>
    </citation>
    <scope>NUCLEOTIDE SEQUENCE [LARGE SCALE GENOMIC DNA]</scope>
    <source>
        <strain>ATCC BAA-1463 / DSM 18972 / AmH</strain>
    </source>
</reference>
<gene>
    <name evidence="1" type="primary">rimP</name>
    <name type="ordered locus">NAMH_1540</name>
</gene>